<evidence type="ECO:0000255" key="1">
    <source>
        <dbReference type="HAMAP-Rule" id="MF_01403"/>
    </source>
</evidence>
<gene>
    <name type="ordered locus">CT1524</name>
</gene>
<protein>
    <recommendedName>
        <fullName evidence="1">Probable phosphoketolase</fullName>
        <ecNumber evidence="1">4.1.2.-</ecNumber>
    </recommendedName>
</protein>
<accession>Q8KCA0</accession>
<reference key="1">
    <citation type="journal article" date="2002" name="Proc. Natl. Acad. Sci. U.S.A.">
        <title>The complete genome sequence of Chlorobium tepidum TLS, a photosynthetic, anaerobic, green-sulfur bacterium.</title>
        <authorList>
            <person name="Eisen J.A."/>
            <person name="Nelson K.E."/>
            <person name="Paulsen I.T."/>
            <person name="Heidelberg J.F."/>
            <person name="Wu M."/>
            <person name="Dodson R.J."/>
            <person name="DeBoy R.T."/>
            <person name="Gwinn M.L."/>
            <person name="Nelson W.C."/>
            <person name="Haft D.H."/>
            <person name="Hickey E.K."/>
            <person name="Peterson J.D."/>
            <person name="Durkin A.S."/>
            <person name="Kolonay J.F."/>
            <person name="Yang F."/>
            <person name="Holt I.E."/>
            <person name="Umayam L.A."/>
            <person name="Mason T.M."/>
            <person name="Brenner M."/>
            <person name="Shea T.P."/>
            <person name="Parksey D.S."/>
            <person name="Nierman W.C."/>
            <person name="Feldblyum T.V."/>
            <person name="Hansen C.L."/>
            <person name="Craven M.B."/>
            <person name="Radune D."/>
            <person name="Vamathevan J.J."/>
            <person name="Khouri H.M."/>
            <person name="White O."/>
            <person name="Gruber T.M."/>
            <person name="Ketchum K.A."/>
            <person name="Venter J.C."/>
            <person name="Tettelin H."/>
            <person name="Bryant D.A."/>
            <person name="Fraser C.M."/>
        </authorList>
    </citation>
    <scope>NUCLEOTIDE SEQUENCE [LARGE SCALE GENOMIC DNA]</scope>
    <source>
        <strain>ATCC 49652 / DSM 12025 / NBRC 103806 / TLS</strain>
    </source>
</reference>
<organism>
    <name type="scientific">Chlorobaculum tepidum (strain ATCC 49652 / DSM 12025 / NBRC 103806 / TLS)</name>
    <name type="common">Chlorobium tepidum</name>
    <dbReference type="NCBI Taxonomy" id="194439"/>
    <lineage>
        <taxon>Bacteria</taxon>
        <taxon>Pseudomonadati</taxon>
        <taxon>Chlorobiota</taxon>
        <taxon>Chlorobiia</taxon>
        <taxon>Chlorobiales</taxon>
        <taxon>Chlorobiaceae</taxon>
        <taxon>Chlorobaculum</taxon>
    </lineage>
</organism>
<keyword id="KW-0456">Lyase</keyword>
<keyword id="KW-1185">Reference proteome</keyword>
<keyword id="KW-0786">Thiamine pyrophosphate</keyword>
<sequence>MTEMTTPLSPRELDLMNAYWRAANYLSVGQIYLMDNPLLKEPLSKEHIKPRLLGHWGTTPGLNFLYVHLNRIIRNRDLDIIYIAGPGHGGPALVANVWLEGTYSEYYPDVSFDEAGMKRLFRQFSFPGGIPSHVAPATPGSIHEGGELGYALSHAYGAVFDNPDLVAACVIGDGEAETGPLATAWHSNKFLNPKRDGAVLPVLHLNGYKIANPTVLARISHEELEQLMIGYGYKPYFVEGDDPATMHQMMAATMDRCFDEIAEIQRRARVDGVTERPMWPMIVFRSPKGWTGPKVVDGKPAEGSWRSHQVPFSTVRDNPEHMALLETWLKSYRAEELFTADGVLLPELQELAPRGKKRMGDIPHANGGLLLKELRMPDFREYGIDVPKPGSVEAEAPKPMARFLRDIMKMNEKAANFRVFGPDETASNRLGELFEETDRTWMAGMLPTDDHLSRDGRVMEILSEHTCQGWLEGYLLTGRHGFFSCYEAFIHIIDSMFNQHAKWLKVTGAEIPWRRPIASLNYFLTSHVWRQDHNGFSHQDPGFIDHVVNKKSSVIRVYLPPDANSLLSVTNHCLRSRNYINVIVAGKQPAWQWLDMESAVRHCTSGIGIWEWASNDANEGEPDVVMACAGDVPTLETLAAVKILRKLAPELKIRVVNVVDLMTLQPKEEHPHGLADRDFDDMFTTDKPIIFAYHGYPWLIHRLTYRRTNHHNLHVRGYKEEGTTTTPFDMVVMNELDRFHLVADVANRVESLRPQAAYIKQYVRDRLIEHKEYITKYGEDMPEVRDWRWED</sequence>
<name>PHK_CHLTE</name>
<comment type="cofactor">
    <cofactor evidence="1">
        <name>thiamine diphosphate</name>
        <dbReference type="ChEBI" id="CHEBI:58937"/>
    </cofactor>
</comment>
<comment type="similarity">
    <text evidence="1">Belongs to the XFP family.</text>
</comment>
<dbReference type="EC" id="4.1.2.-" evidence="1"/>
<dbReference type="EMBL" id="AE006470">
    <property type="protein sequence ID" value="AAM72751.2"/>
    <property type="molecule type" value="Genomic_DNA"/>
</dbReference>
<dbReference type="RefSeq" id="NP_662409.1">
    <property type="nucleotide sequence ID" value="NC_002932.3"/>
</dbReference>
<dbReference type="RefSeq" id="WP_164927044.1">
    <property type="nucleotide sequence ID" value="NC_002932.3"/>
</dbReference>
<dbReference type="SMR" id="Q8KCA0"/>
<dbReference type="STRING" id="194439.CT1524"/>
<dbReference type="EnsemblBacteria" id="AAM72751">
    <property type="protein sequence ID" value="AAM72751"/>
    <property type="gene ID" value="CT1524"/>
</dbReference>
<dbReference type="KEGG" id="cte:CT1524"/>
<dbReference type="PATRIC" id="fig|194439.7.peg.1379"/>
<dbReference type="eggNOG" id="COG3957">
    <property type="taxonomic scope" value="Bacteria"/>
</dbReference>
<dbReference type="HOGENOM" id="CLU_013954_2_0_10"/>
<dbReference type="OrthoDB" id="9768449at2"/>
<dbReference type="Proteomes" id="UP000001007">
    <property type="component" value="Chromosome"/>
</dbReference>
<dbReference type="GO" id="GO:0016832">
    <property type="term" value="F:aldehyde-lyase activity"/>
    <property type="evidence" value="ECO:0007669"/>
    <property type="project" value="UniProtKB-UniRule"/>
</dbReference>
<dbReference type="GO" id="GO:0005975">
    <property type="term" value="P:carbohydrate metabolic process"/>
    <property type="evidence" value="ECO:0007669"/>
    <property type="project" value="InterPro"/>
</dbReference>
<dbReference type="CDD" id="cd02011">
    <property type="entry name" value="TPP_PK"/>
    <property type="match status" value="1"/>
</dbReference>
<dbReference type="FunFam" id="3.40.50.970:FF:000091">
    <property type="entry name" value="Xylulose-5-phosphate/fructose-6-phosphate phosphoketolase"/>
    <property type="match status" value="1"/>
</dbReference>
<dbReference type="Gene3D" id="3.40.50.920">
    <property type="match status" value="1"/>
</dbReference>
<dbReference type="Gene3D" id="3.40.50.970">
    <property type="match status" value="2"/>
</dbReference>
<dbReference type="HAMAP" id="MF_01403">
    <property type="entry name" value="Phosphoketolase"/>
    <property type="match status" value="1"/>
</dbReference>
<dbReference type="InterPro" id="IPR023962">
    <property type="entry name" value="Phosphoketolase"/>
</dbReference>
<dbReference type="InterPro" id="IPR029061">
    <property type="entry name" value="THDP-binding"/>
</dbReference>
<dbReference type="InterPro" id="IPR009014">
    <property type="entry name" value="Transketo_C/PFOR_II"/>
</dbReference>
<dbReference type="InterPro" id="IPR005593">
    <property type="entry name" value="Xul5P/Fru6P_PKetolase"/>
</dbReference>
<dbReference type="InterPro" id="IPR018969">
    <property type="entry name" value="Xul5P/Fru6P_PKetolase_C"/>
</dbReference>
<dbReference type="InterPro" id="IPR019790">
    <property type="entry name" value="Xul5P/Fru6P_PKetolase_CS"/>
</dbReference>
<dbReference type="InterPro" id="IPR018970">
    <property type="entry name" value="Xul5P/Fru6P_PKetolase_N"/>
</dbReference>
<dbReference type="InterPro" id="IPR019789">
    <property type="entry name" value="Xul5P/Fru6P_PKetolase_ThDP_BS"/>
</dbReference>
<dbReference type="NCBIfam" id="NF003616">
    <property type="entry name" value="PRK05261.1-1"/>
    <property type="match status" value="1"/>
</dbReference>
<dbReference type="NCBIfam" id="NF003617">
    <property type="entry name" value="PRK05261.1-2"/>
    <property type="match status" value="1"/>
</dbReference>
<dbReference type="NCBIfam" id="NF003619">
    <property type="entry name" value="PRK05261.1-4"/>
    <property type="match status" value="1"/>
</dbReference>
<dbReference type="NCBIfam" id="NF003621">
    <property type="entry name" value="PRK05261.1-6"/>
    <property type="match status" value="1"/>
</dbReference>
<dbReference type="PANTHER" id="PTHR31273">
    <property type="entry name" value="PHOSPHOKETOLASE-RELATED"/>
    <property type="match status" value="1"/>
</dbReference>
<dbReference type="PANTHER" id="PTHR31273:SF0">
    <property type="entry name" value="PHOSPHOKETOLASE-RELATED"/>
    <property type="match status" value="1"/>
</dbReference>
<dbReference type="Pfam" id="PF03894">
    <property type="entry name" value="XFP"/>
    <property type="match status" value="1"/>
</dbReference>
<dbReference type="Pfam" id="PF09363">
    <property type="entry name" value="XFP_C"/>
    <property type="match status" value="1"/>
</dbReference>
<dbReference type="Pfam" id="PF09364">
    <property type="entry name" value="XFP_N"/>
    <property type="match status" value="1"/>
</dbReference>
<dbReference type="PIRSF" id="PIRSF017245">
    <property type="entry name" value="Phosphoketolase"/>
    <property type="match status" value="1"/>
</dbReference>
<dbReference type="SUPFAM" id="SSF52518">
    <property type="entry name" value="Thiamin diphosphate-binding fold (THDP-binding)"/>
    <property type="match status" value="2"/>
</dbReference>
<dbReference type="PROSITE" id="PS60002">
    <property type="entry name" value="PHOSPHOKETOLASE_1"/>
    <property type="match status" value="1"/>
</dbReference>
<dbReference type="PROSITE" id="PS60003">
    <property type="entry name" value="PHOSPHOKETOLASE_2"/>
    <property type="match status" value="1"/>
</dbReference>
<feature type="chain" id="PRO_0000193874" description="Probable phosphoketolase">
    <location>
        <begin position="1"/>
        <end position="791"/>
    </location>
</feature>
<proteinExistence type="inferred from homology"/>